<accession>P06540</accession>
<organism>
    <name type="scientific">Nostoc sp. (strain PCC 7120 / SAG 25.82 / UTEX 2576)</name>
    <dbReference type="NCBI Taxonomy" id="103690"/>
    <lineage>
        <taxon>Bacteria</taxon>
        <taxon>Bacillati</taxon>
        <taxon>Cyanobacteriota</taxon>
        <taxon>Cyanophyceae</taxon>
        <taxon>Nostocales</taxon>
        <taxon>Nostocaceae</taxon>
        <taxon>Nostoc</taxon>
    </lineage>
</organism>
<dbReference type="EC" id="7.1.2.2" evidence="1"/>
<dbReference type="EMBL" id="M15336">
    <property type="protein sequence ID" value="AAA21993.1"/>
    <property type="molecule type" value="Genomic_DNA"/>
</dbReference>
<dbReference type="EMBL" id="BA000019">
    <property type="protein sequence ID" value="BAB76738.1"/>
    <property type="molecule type" value="Genomic_DNA"/>
</dbReference>
<dbReference type="PIR" id="A26926">
    <property type="entry name" value="A26926"/>
</dbReference>
<dbReference type="PIR" id="AG2435">
    <property type="entry name" value="AG2435"/>
</dbReference>
<dbReference type="RefSeq" id="WP_010999165.1">
    <property type="nucleotide sequence ID" value="NZ_RSCN01000014.1"/>
</dbReference>
<dbReference type="SMR" id="P06540"/>
<dbReference type="STRING" id="103690.gene:10497097"/>
<dbReference type="KEGG" id="ana:all5039"/>
<dbReference type="eggNOG" id="COG0055">
    <property type="taxonomic scope" value="Bacteria"/>
</dbReference>
<dbReference type="OrthoDB" id="9801639at2"/>
<dbReference type="Proteomes" id="UP000002483">
    <property type="component" value="Chromosome"/>
</dbReference>
<dbReference type="GO" id="GO:0031676">
    <property type="term" value="C:plasma membrane-derived thylakoid membrane"/>
    <property type="evidence" value="ECO:0007669"/>
    <property type="project" value="UniProtKB-SubCell"/>
</dbReference>
<dbReference type="GO" id="GO:0045259">
    <property type="term" value="C:proton-transporting ATP synthase complex"/>
    <property type="evidence" value="ECO:0007669"/>
    <property type="project" value="UniProtKB-KW"/>
</dbReference>
<dbReference type="GO" id="GO:0005524">
    <property type="term" value="F:ATP binding"/>
    <property type="evidence" value="ECO:0007669"/>
    <property type="project" value="UniProtKB-UniRule"/>
</dbReference>
<dbReference type="GO" id="GO:0016887">
    <property type="term" value="F:ATP hydrolysis activity"/>
    <property type="evidence" value="ECO:0007669"/>
    <property type="project" value="InterPro"/>
</dbReference>
<dbReference type="GO" id="GO:0046933">
    <property type="term" value="F:proton-transporting ATP synthase activity, rotational mechanism"/>
    <property type="evidence" value="ECO:0007669"/>
    <property type="project" value="UniProtKB-UniRule"/>
</dbReference>
<dbReference type="CDD" id="cd18110">
    <property type="entry name" value="ATP-synt_F1_beta_C"/>
    <property type="match status" value="1"/>
</dbReference>
<dbReference type="CDD" id="cd18115">
    <property type="entry name" value="ATP-synt_F1_beta_N"/>
    <property type="match status" value="1"/>
</dbReference>
<dbReference type="CDD" id="cd01133">
    <property type="entry name" value="F1-ATPase_beta_CD"/>
    <property type="match status" value="1"/>
</dbReference>
<dbReference type="FunFam" id="1.10.1140.10:FF:000001">
    <property type="entry name" value="ATP synthase subunit beta"/>
    <property type="match status" value="1"/>
</dbReference>
<dbReference type="FunFam" id="3.40.50.300:FF:000004">
    <property type="entry name" value="ATP synthase subunit beta"/>
    <property type="match status" value="1"/>
</dbReference>
<dbReference type="FunFam" id="2.40.10.170:FF:000002">
    <property type="entry name" value="ATP synthase subunit beta, chloroplastic"/>
    <property type="match status" value="1"/>
</dbReference>
<dbReference type="Gene3D" id="2.40.10.170">
    <property type="match status" value="1"/>
</dbReference>
<dbReference type="Gene3D" id="1.10.1140.10">
    <property type="entry name" value="Bovine Mitochondrial F1-atpase, Atp Synthase Beta Chain, Chain D, domain 3"/>
    <property type="match status" value="1"/>
</dbReference>
<dbReference type="Gene3D" id="3.40.50.300">
    <property type="entry name" value="P-loop containing nucleotide triphosphate hydrolases"/>
    <property type="match status" value="1"/>
</dbReference>
<dbReference type="HAMAP" id="MF_01347">
    <property type="entry name" value="ATP_synth_beta_bact"/>
    <property type="match status" value="1"/>
</dbReference>
<dbReference type="InterPro" id="IPR003593">
    <property type="entry name" value="AAA+_ATPase"/>
</dbReference>
<dbReference type="InterPro" id="IPR055190">
    <property type="entry name" value="ATP-synt_VA_C"/>
</dbReference>
<dbReference type="InterPro" id="IPR005722">
    <property type="entry name" value="ATP_synth_F1_bsu"/>
</dbReference>
<dbReference type="InterPro" id="IPR020003">
    <property type="entry name" value="ATPase_a/bsu_AS"/>
</dbReference>
<dbReference type="InterPro" id="IPR050053">
    <property type="entry name" value="ATPase_alpha/beta_chains"/>
</dbReference>
<dbReference type="InterPro" id="IPR004100">
    <property type="entry name" value="ATPase_F1/V1/A1_a/bsu_N"/>
</dbReference>
<dbReference type="InterPro" id="IPR036121">
    <property type="entry name" value="ATPase_F1/V1/A1_a/bsu_N_sf"/>
</dbReference>
<dbReference type="InterPro" id="IPR000194">
    <property type="entry name" value="ATPase_F1/V1/A1_a/bsu_nucl-bd"/>
</dbReference>
<dbReference type="InterPro" id="IPR024034">
    <property type="entry name" value="ATPase_F1/V1_b/a_C"/>
</dbReference>
<dbReference type="InterPro" id="IPR027417">
    <property type="entry name" value="P-loop_NTPase"/>
</dbReference>
<dbReference type="NCBIfam" id="TIGR01039">
    <property type="entry name" value="atpD"/>
    <property type="match status" value="1"/>
</dbReference>
<dbReference type="PANTHER" id="PTHR15184">
    <property type="entry name" value="ATP SYNTHASE"/>
    <property type="match status" value="1"/>
</dbReference>
<dbReference type="PANTHER" id="PTHR15184:SF71">
    <property type="entry name" value="ATP SYNTHASE SUBUNIT BETA, MITOCHONDRIAL"/>
    <property type="match status" value="1"/>
</dbReference>
<dbReference type="Pfam" id="PF00006">
    <property type="entry name" value="ATP-synt_ab"/>
    <property type="match status" value="1"/>
</dbReference>
<dbReference type="Pfam" id="PF02874">
    <property type="entry name" value="ATP-synt_ab_N"/>
    <property type="match status" value="1"/>
</dbReference>
<dbReference type="Pfam" id="PF22919">
    <property type="entry name" value="ATP-synt_VA_C"/>
    <property type="match status" value="1"/>
</dbReference>
<dbReference type="PIRSF" id="PIRSF039072">
    <property type="entry name" value="ATPase_subunit_beta"/>
    <property type="match status" value="1"/>
</dbReference>
<dbReference type="SMART" id="SM00382">
    <property type="entry name" value="AAA"/>
    <property type="match status" value="1"/>
</dbReference>
<dbReference type="SUPFAM" id="SSF47917">
    <property type="entry name" value="C-terminal domain of alpha and beta subunits of F1 ATP synthase"/>
    <property type="match status" value="1"/>
</dbReference>
<dbReference type="SUPFAM" id="SSF50615">
    <property type="entry name" value="N-terminal domain of alpha and beta subunits of F1 ATP synthase"/>
    <property type="match status" value="1"/>
</dbReference>
<dbReference type="SUPFAM" id="SSF52540">
    <property type="entry name" value="P-loop containing nucleoside triphosphate hydrolases"/>
    <property type="match status" value="1"/>
</dbReference>
<dbReference type="PROSITE" id="PS00152">
    <property type="entry name" value="ATPASE_ALPHA_BETA"/>
    <property type="match status" value="1"/>
</dbReference>
<protein>
    <recommendedName>
        <fullName evidence="1">ATP synthase subunit beta</fullName>
        <ecNumber evidence="1">7.1.2.2</ecNumber>
    </recommendedName>
    <alternativeName>
        <fullName evidence="1">ATP synthase F1 sector subunit beta</fullName>
    </alternativeName>
    <alternativeName>
        <fullName evidence="1">F-ATPase subunit beta</fullName>
    </alternativeName>
</protein>
<evidence type="ECO:0000255" key="1">
    <source>
        <dbReference type="HAMAP-Rule" id="MF_01347"/>
    </source>
</evidence>
<evidence type="ECO:0000305" key="2"/>
<gene>
    <name evidence="1" type="primary">atpD</name>
    <name evidence="1" type="synonym">atpB</name>
    <name type="ordered locus">all5039</name>
</gene>
<proteinExistence type="inferred from homology"/>
<name>ATPB_NOSS1</name>
<comment type="function">
    <text evidence="1">Produces ATP from ADP in the presence of a proton gradient across the membrane. The catalytic sites are hosted primarily by the beta subunits.</text>
</comment>
<comment type="catalytic activity">
    <reaction evidence="1">
        <text>ATP + H2O + 4 H(+)(in) = ADP + phosphate + 5 H(+)(out)</text>
        <dbReference type="Rhea" id="RHEA:57720"/>
        <dbReference type="ChEBI" id="CHEBI:15377"/>
        <dbReference type="ChEBI" id="CHEBI:15378"/>
        <dbReference type="ChEBI" id="CHEBI:30616"/>
        <dbReference type="ChEBI" id="CHEBI:43474"/>
        <dbReference type="ChEBI" id="CHEBI:456216"/>
        <dbReference type="EC" id="7.1.2.2"/>
    </reaction>
</comment>
<comment type="subunit">
    <text evidence="1">F-type ATPases have 2 components, CF(1) - the catalytic core - and CF(0) - the membrane proton channel. CF(1) has five subunits: alpha(3), beta(3), gamma(1), delta(1), epsilon(1). CF(0) has four main subunits: a(1), b(1), b'(1) and c(9-12).</text>
</comment>
<comment type="subcellular location">
    <subcellularLocation>
        <location evidence="1">Cellular thylakoid membrane</location>
        <topology evidence="1">Peripheral membrane protein</topology>
    </subcellularLocation>
</comment>
<comment type="similarity">
    <text evidence="1">Belongs to the ATPase alpha/beta chains family.</text>
</comment>
<feature type="chain" id="PRO_0000144414" description="ATP synthase subunit beta">
    <location>
        <begin position="1"/>
        <end position="482"/>
    </location>
</feature>
<feature type="binding site" evidence="1">
    <location>
        <begin position="162"/>
        <end position="169"/>
    </location>
    <ligand>
        <name>ATP</name>
        <dbReference type="ChEBI" id="CHEBI:30616"/>
    </ligand>
</feature>
<feature type="sequence conflict" description="In Ref. 1; AAA21993." evidence="2" ref="1">
    <original>ESGVINNENLNESKI</original>
    <variation>DSKN</variation>
    <location>
        <begin position="208"/>
        <end position="222"/>
    </location>
</feature>
<feature type="sequence conflict" description="In Ref. 1; AAA21993." evidence="2" ref="1">
    <original>I</original>
    <variation>L</variation>
    <location>
        <position position="410"/>
    </location>
</feature>
<reference key="1">
    <citation type="journal article" date="1987" name="J. Bacteriol.">
        <title>Genes encoding the beta and epsilon subunits of the proton-translocating ATPase from Anabaena sp. strain PCC 7120.</title>
        <authorList>
            <person name="Curtis S.E."/>
        </authorList>
    </citation>
    <scope>NUCLEOTIDE SEQUENCE [GENOMIC DNA]</scope>
</reference>
<reference key="2">
    <citation type="journal article" date="2001" name="DNA Res.">
        <title>Complete genomic sequence of the filamentous nitrogen-fixing cyanobacterium Anabaena sp. strain PCC 7120.</title>
        <authorList>
            <person name="Kaneko T."/>
            <person name="Nakamura Y."/>
            <person name="Wolk C.P."/>
            <person name="Kuritz T."/>
            <person name="Sasamoto S."/>
            <person name="Watanabe A."/>
            <person name="Iriguchi M."/>
            <person name="Ishikawa A."/>
            <person name="Kawashima K."/>
            <person name="Kimura T."/>
            <person name="Kishida Y."/>
            <person name="Kohara M."/>
            <person name="Matsumoto M."/>
            <person name="Matsuno A."/>
            <person name="Muraki A."/>
            <person name="Nakazaki N."/>
            <person name="Shimpo S."/>
            <person name="Sugimoto M."/>
            <person name="Takazawa M."/>
            <person name="Yamada M."/>
            <person name="Yasuda M."/>
            <person name="Tabata S."/>
        </authorList>
    </citation>
    <scope>NUCLEOTIDE SEQUENCE [LARGE SCALE GENOMIC DNA]</scope>
    <source>
        <strain>PCC 7120 / SAG 25.82 / UTEX 2576</strain>
    </source>
</reference>
<keyword id="KW-0066">ATP synthesis</keyword>
<keyword id="KW-0067">ATP-binding</keyword>
<keyword id="KW-0139">CF(1)</keyword>
<keyword id="KW-0375">Hydrogen ion transport</keyword>
<keyword id="KW-0406">Ion transport</keyword>
<keyword id="KW-0472">Membrane</keyword>
<keyword id="KW-0547">Nucleotide-binding</keyword>
<keyword id="KW-1185">Reference proteome</keyword>
<keyword id="KW-0793">Thylakoid</keyword>
<keyword id="KW-1278">Translocase</keyword>
<keyword id="KW-0813">Transport</keyword>
<sequence length="482" mass="52016">MVTTAEKTNIGYITQIIGPVVDVKFPNGKLPQIYNALTIKGTNEAGQQLNLTVEVQQLLGDNQIRAVAMSSTDGLVRGLEVVDTGAPISVPVGKATLGRIFNVLGEPVDNRGPVNNQETLPIHRPAPKLTELETKPSVFETGIKVVDLLTPYRRGGKIGLFGGAGVGKTVIMMELINNIATQHGGVSVFAGVGERTREGNDLYNEMIESGVINNENLNESKIALVYGQMNEPPGARMRVGLSGLTMAEYFRDVNKQDVLLFIDNIFRFVQAGSEVSALLGRMPSAVGYQPTLGTDVGQLQERITSTTEGSITSIQAVYVPADDLTDPAPATTFAHLDGTTVLSRGLASKGIYPAVDPLGSTSTMLQPNIVGDEHYNTARAVQSTLQRYKELQDIIAILGLDELSEEDRLIVARARKVERFLSQPFFVAEVFTGSPGKYVKLEDTIKGFQKILSGELDDLPEQAFYLVGDINEAIAKAEKIKG</sequence>